<dbReference type="EMBL" id="CP000505">
    <property type="protein sequence ID" value="ABL77871.1"/>
    <property type="molecule type" value="Genomic_DNA"/>
</dbReference>
<dbReference type="RefSeq" id="WP_011752136.1">
    <property type="nucleotide sequence ID" value="NC_008698.1"/>
</dbReference>
<dbReference type="SMR" id="A1RXE1"/>
<dbReference type="STRING" id="368408.Tpen_0462"/>
<dbReference type="EnsemblBacteria" id="ABL77871">
    <property type="protein sequence ID" value="ABL77871"/>
    <property type="gene ID" value="Tpen_0462"/>
</dbReference>
<dbReference type="GeneID" id="4600989"/>
<dbReference type="KEGG" id="tpe:Tpen_0462"/>
<dbReference type="eggNOG" id="arCOG04167">
    <property type="taxonomic scope" value="Archaea"/>
</dbReference>
<dbReference type="HOGENOM" id="CLU_183474_0_0_2"/>
<dbReference type="OrthoDB" id="63594at2157"/>
<dbReference type="Proteomes" id="UP000000641">
    <property type="component" value="Chromosome"/>
</dbReference>
<dbReference type="GO" id="GO:0022625">
    <property type="term" value="C:cytosolic large ribosomal subunit"/>
    <property type="evidence" value="ECO:0007669"/>
    <property type="project" value="TreeGrafter"/>
</dbReference>
<dbReference type="GO" id="GO:0003723">
    <property type="term" value="F:RNA binding"/>
    <property type="evidence" value="ECO:0007669"/>
    <property type="project" value="InterPro"/>
</dbReference>
<dbReference type="GO" id="GO:0003735">
    <property type="term" value="F:structural constituent of ribosome"/>
    <property type="evidence" value="ECO:0007669"/>
    <property type="project" value="InterPro"/>
</dbReference>
<dbReference type="GO" id="GO:0042273">
    <property type="term" value="P:ribosomal large subunit biogenesis"/>
    <property type="evidence" value="ECO:0007669"/>
    <property type="project" value="TreeGrafter"/>
</dbReference>
<dbReference type="GO" id="GO:0006412">
    <property type="term" value="P:translation"/>
    <property type="evidence" value="ECO:0007669"/>
    <property type="project" value="UniProtKB-UniRule"/>
</dbReference>
<dbReference type="CDD" id="cd06088">
    <property type="entry name" value="KOW_RPL14"/>
    <property type="match status" value="1"/>
</dbReference>
<dbReference type="FunFam" id="2.30.30.30:FF:000045">
    <property type="entry name" value="50S ribosomal protein L14e"/>
    <property type="match status" value="1"/>
</dbReference>
<dbReference type="Gene3D" id="2.30.30.30">
    <property type="match status" value="1"/>
</dbReference>
<dbReference type="HAMAP" id="MF_00721">
    <property type="entry name" value="Ribosomal_eL14"/>
    <property type="match status" value="1"/>
</dbReference>
<dbReference type="InterPro" id="IPR005824">
    <property type="entry name" value="KOW"/>
</dbReference>
<dbReference type="InterPro" id="IPR014722">
    <property type="entry name" value="Rib_uL2_dom2"/>
</dbReference>
<dbReference type="InterPro" id="IPR039660">
    <property type="entry name" value="Ribosomal_eL14"/>
</dbReference>
<dbReference type="InterPro" id="IPR023651">
    <property type="entry name" value="Ribosomal_eL14_arc"/>
</dbReference>
<dbReference type="InterPro" id="IPR041985">
    <property type="entry name" value="Ribosomal_eL14_KOW"/>
</dbReference>
<dbReference type="InterPro" id="IPR008991">
    <property type="entry name" value="Translation_prot_SH3-like_sf"/>
</dbReference>
<dbReference type="NCBIfam" id="NF003320">
    <property type="entry name" value="PRK04333.1"/>
    <property type="match status" value="1"/>
</dbReference>
<dbReference type="PANTHER" id="PTHR11127">
    <property type="entry name" value="60S RIBOSOMAL PROTEIN L14"/>
    <property type="match status" value="1"/>
</dbReference>
<dbReference type="PANTHER" id="PTHR11127:SF2">
    <property type="entry name" value="LARGE RIBOSOMAL SUBUNIT PROTEIN EL14"/>
    <property type="match status" value="1"/>
</dbReference>
<dbReference type="Pfam" id="PF00467">
    <property type="entry name" value="KOW"/>
    <property type="match status" value="1"/>
</dbReference>
<dbReference type="SUPFAM" id="SSF50104">
    <property type="entry name" value="Translation proteins SH3-like domain"/>
    <property type="match status" value="1"/>
</dbReference>
<name>RL14E_THEPD</name>
<comment type="similarity">
    <text evidence="1">Belongs to the eukaryotic ribosomal protein eL14 family.</text>
</comment>
<accession>A1RXE1</accession>
<proteinExistence type="inferred from homology"/>
<organism>
    <name type="scientific">Thermofilum pendens (strain DSM 2475 / Hrk 5)</name>
    <dbReference type="NCBI Taxonomy" id="368408"/>
    <lineage>
        <taxon>Archaea</taxon>
        <taxon>Thermoproteota</taxon>
        <taxon>Thermoprotei</taxon>
        <taxon>Thermofilales</taxon>
        <taxon>Thermofilaceae</taxon>
        <taxon>Thermofilum</taxon>
    </lineage>
</organism>
<sequence>MKVYDVGRICVKTSGREAGLKCVIVDIIDDNFVLVTGPKSVSGVKRRRANIRHLEPLEYKISISKGASDEEVKAALEKAGLIEFMKEKVKPTVSTTFV</sequence>
<evidence type="ECO:0000255" key="1">
    <source>
        <dbReference type="HAMAP-Rule" id="MF_00721"/>
    </source>
</evidence>
<evidence type="ECO:0000305" key="2"/>
<gene>
    <name evidence="1" type="primary">rpl14e</name>
    <name type="ordered locus">Tpen_0462</name>
</gene>
<protein>
    <recommendedName>
        <fullName evidence="1">Large ribosomal subunit protein eL14</fullName>
    </recommendedName>
    <alternativeName>
        <fullName evidence="2">50S ribosomal protein L14e</fullName>
    </alternativeName>
</protein>
<feature type="chain" id="PRO_1000083308" description="Large ribosomal subunit protein eL14">
    <location>
        <begin position="1"/>
        <end position="98"/>
    </location>
</feature>
<reference key="1">
    <citation type="journal article" date="2008" name="J. Bacteriol.">
        <title>Genome sequence of Thermofilum pendens reveals an exceptional loss of biosynthetic pathways without genome reduction.</title>
        <authorList>
            <person name="Anderson I."/>
            <person name="Rodriguez J."/>
            <person name="Susanti D."/>
            <person name="Porat I."/>
            <person name="Reich C."/>
            <person name="Ulrich L.E."/>
            <person name="Elkins J.G."/>
            <person name="Mavromatis K."/>
            <person name="Lykidis A."/>
            <person name="Kim E."/>
            <person name="Thompson L.S."/>
            <person name="Nolan M."/>
            <person name="Land M."/>
            <person name="Copeland A."/>
            <person name="Lapidus A."/>
            <person name="Lucas S."/>
            <person name="Detter C."/>
            <person name="Zhulin I.B."/>
            <person name="Olsen G.J."/>
            <person name="Whitman W."/>
            <person name="Mukhopadhyay B."/>
            <person name="Bristow J."/>
            <person name="Kyrpides N."/>
        </authorList>
    </citation>
    <scope>NUCLEOTIDE SEQUENCE [LARGE SCALE GENOMIC DNA]</scope>
    <source>
        <strain>DSM 2475 / Hrk 5</strain>
    </source>
</reference>
<keyword id="KW-1185">Reference proteome</keyword>
<keyword id="KW-0687">Ribonucleoprotein</keyword>
<keyword id="KW-0689">Ribosomal protein</keyword>